<feature type="chain" id="PRO_0000164345" description="Protein NrdI">
    <location>
        <begin position="1"/>
        <end position="162"/>
    </location>
</feature>
<reference key="1">
    <citation type="journal article" date="2004" name="J. Infect. Dis.">
        <title>Progress toward characterization of the group A Streptococcus metagenome: complete genome sequence of a macrolide-resistant serotype M6 strain.</title>
        <authorList>
            <person name="Banks D.J."/>
            <person name="Porcella S.F."/>
            <person name="Barbian K.D."/>
            <person name="Beres S.B."/>
            <person name="Philips L.E."/>
            <person name="Voyich J.M."/>
            <person name="DeLeo F.R."/>
            <person name="Martin J.M."/>
            <person name="Somerville G.A."/>
            <person name="Musser J.M."/>
        </authorList>
    </citation>
    <scope>NUCLEOTIDE SEQUENCE [LARGE SCALE GENOMIC DNA]</scope>
    <source>
        <strain>ATCC BAA-946 / MGAS10394</strain>
    </source>
</reference>
<dbReference type="EMBL" id="CP000003">
    <property type="protein sequence ID" value="AAT86508.1"/>
    <property type="molecule type" value="Genomic_DNA"/>
</dbReference>
<dbReference type="RefSeq" id="WP_002990870.1">
    <property type="nucleotide sequence ID" value="NC_006086.1"/>
</dbReference>
<dbReference type="SMR" id="Q5XDK5"/>
<dbReference type="GeneID" id="69901324"/>
<dbReference type="KEGG" id="spa:M6_Spy0373"/>
<dbReference type="HOGENOM" id="CLU_114845_0_0_9"/>
<dbReference type="Proteomes" id="UP000001167">
    <property type="component" value="Chromosome"/>
</dbReference>
<dbReference type="GO" id="GO:0010181">
    <property type="term" value="F:FMN binding"/>
    <property type="evidence" value="ECO:0007669"/>
    <property type="project" value="InterPro"/>
</dbReference>
<dbReference type="GO" id="GO:0036211">
    <property type="term" value="P:protein modification process"/>
    <property type="evidence" value="ECO:0007669"/>
    <property type="project" value="InterPro"/>
</dbReference>
<dbReference type="Gene3D" id="3.40.50.360">
    <property type="match status" value="1"/>
</dbReference>
<dbReference type="HAMAP" id="MF_00128">
    <property type="entry name" value="NrdI"/>
    <property type="match status" value="1"/>
</dbReference>
<dbReference type="InterPro" id="IPR029039">
    <property type="entry name" value="Flavoprotein-like_sf"/>
</dbReference>
<dbReference type="InterPro" id="IPR020852">
    <property type="entry name" value="RNR_Ib_NrdI_bac"/>
</dbReference>
<dbReference type="InterPro" id="IPR004465">
    <property type="entry name" value="RNR_NrdI"/>
</dbReference>
<dbReference type="NCBIfam" id="TIGR00333">
    <property type="entry name" value="nrdI"/>
    <property type="match status" value="1"/>
</dbReference>
<dbReference type="PANTHER" id="PTHR37297">
    <property type="entry name" value="PROTEIN NRDI"/>
    <property type="match status" value="1"/>
</dbReference>
<dbReference type="PANTHER" id="PTHR37297:SF1">
    <property type="entry name" value="PROTEIN NRDI"/>
    <property type="match status" value="1"/>
</dbReference>
<dbReference type="Pfam" id="PF07972">
    <property type="entry name" value="Flavodoxin_NdrI"/>
    <property type="match status" value="1"/>
</dbReference>
<dbReference type="PIRSF" id="PIRSF005087">
    <property type="entry name" value="NrdI"/>
    <property type="match status" value="1"/>
</dbReference>
<dbReference type="SUPFAM" id="SSF52218">
    <property type="entry name" value="Flavoproteins"/>
    <property type="match status" value="1"/>
</dbReference>
<sequence>MAELIIVYFSSKSNNTHRFVQKLGLPAQRIPVDNRPLEVSTHYLLIVPTYAAGGSDAKGAVPKQVIRFLNNPNNRKHCKGVISSGNTNFGDTFALAGPIISQKLQVPLLHQFELLGTATDVKKVQAIFARLKHHTHDKQKQTNNLITERTHPCHKPMRHTSH</sequence>
<protein>
    <recommendedName>
        <fullName evidence="1">Protein NrdI</fullName>
    </recommendedName>
</protein>
<comment type="function">
    <text evidence="1">Probably involved in ribonucleotide reductase function.</text>
</comment>
<comment type="similarity">
    <text evidence="1">Belongs to the NrdI family.</text>
</comment>
<proteinExistence type="inferred from homology"/>
<accession>Q5XDK5</accession>
<evidence type="ECO:0000255" key="1">
    <source>
        <dbReference type="HAMAP-Rule" id="MF_00128"/>
    </source>
</evidence>
<name>NRDI_STRP6</name>
<organism>
    <name type="scientific">Streptococcus pyogenes serotype M6 (strain ATCC BAA-946 / MGAS10394)</name>
    <dbReference type="NCBI Taxonomy" id="286636"/>
    <lineage>
        <taxon>Bacteria</taxon>
        <taxon>Bacillati</taxon>
        <taxon>Bacillota</taxon>
        <taxon>Bacilli</taxon>
        <taxon>Lactobacillales</taxon>
        <taxon>Streptococcaceae</taxon>
        <taxon>Streptococcus</taxon>
    </lineage>
</organism>
<gene>
    <name evidence="1" type="primary">nrdI</name>
    <name type="ordered locus">M6_Spy0373</name>
</gene>